<feature type="signal peptide" evidence="1">
    <location>
        <begin position="1"/>
        <end position="16"/>
    </location>
</feature>
<feature type="chain" id="PRO_0000440452" description="Hemagglutinin" evidence="1">
    <location>
        <begin position="17"/>
        <end position="566"/>
    </location>
</feature>
<feature type="chain" id="PRO_5000135954" description="Hemagglutinin HA1 chain">
    <location>
        <begin position="17"/>
        <end position="344"/>
    </location>
</feature>
<feature type="chain" id="PRO_5000135955" description="Hemagglutinin HA2 chain" evidence="1">
    <location>
        <begin position="346"/>
        <end position="566"/>
    </location>
</feature>
<feature type="topological domain" description="Extracellular" evidence="1">
    <location>
        <begin position="17"/>
        <end position="530"/>
    </location>
</feature>
<feature type="transmembrane region" description="Helical" evidence="1">
    <location>
        <begin position="531"/>
        <end position="551"/>
    </location>
</feature>
<feature type="topological domain" description="Cytoplasmic" evidence="1">
    <location>
        <begin position="552"/>
        <end position="566"/>
    </location>
</feature>
<feature type="site" description="Cleavage; by host" evidence="1">
    <location>
        <begin position="345"/>
        <end position="346"/>
    </location>
</feature>
<feature type="lipid moiety-binding region" description="S-palmitoyl cysteine; by host" evidence="1">
    <location>
        <position position="555"/>
    </location>
</feature>
<feature type="lipid moiety-binding region" description="S-palmitoyl cysteine; by host" evidence="1">
    <location>
        <position position="562"/>
    </location>
</feature>
<feature type="lipid moiety-binding region" description="S-palmitoyl cysteine; by host" evidence="1">
    <location>
        <position position="565"/>
    </location>
</feature>
<feature type="glycosylation site" description="N-linked (GlcNAc...) asparagine; by host" evidence="1">
    <location>
        <position position="24"/>
    </location>
</feature>
<feature type="glycosylation site" description="N-linked (GlcNAc...) asparagine; by host" evidence="1">
    <location>
        <position position="38"/>
    </location>
</feature>
<feature type="glycosylation site" description="N-linked (GlcNAc...) asparagine; by host" evidence="1">
    <location>
        <position position="54"/>
    </location>
</feature>
<feature type="glycosylation site" description="N-linked (GlcNAc...) asparagine; by host" evidence="1">
    <location>
        <position position="79"/>
    </location>
</feature>
<feature type="glycosylation site" description="N-linked (GlcNAc...) asparagine; by host" evidence="1">
    <location>
        <position position="142"/>
    </location>
</feature>
<feature type="glycosylation site" description="N-linked (GlcNAc...) asparagine; by host" evidence="1">
    <location>
        <position position="181"/>
    </location>
</feature>
<feature type="glycosylation site" description="N-linked (GlcNAc...) asparagine; by host" evidence="1">
    <location>
        <position position="301"/>
    </location>
</feature>
<feature type="glycosylation site" description="N-linked (GlcNAc...) asparagine; by host" evidence="1">
    <location>
        <position position="499"/>
    </location>
</feature>
<feature type="disulfide bond" description="Interchain (between HA1 and HA2 chains)" evidence="1">
    <location>
        <begin position="30"/>
        <end position="482"/>
    </location>
</feature>
<feature type="disulfide bond" evidence="1">
    <location>
        <begin position="68"/>
        <end position="293"/>
    </location>
</feature>
<feature type="disulfide bond" evidence="1">
    <location>
        <begin position="80"/>
        <end position="92"/>
    </location>
</feature>
<feature type="disulfide bond" evidence="1">
    <location>
        <begin position="113"/>
        <end position="155"/>
    </location>
</feature>
<feature type="disulfide bond" evidence="1">
    <location>
        <begin position="297"/>
        <end position="321"/>
    </location>
</feature>
<feature type="disulfide bond" evidence="1">
    <location>
        <begin position="489"/>
        <end position="493"/>
    </location>
</feature>
<name>HEMA_I76A6</name>
<keyword id="KW-1167">Clathrin- and caveolin-independent endocytosis of virus by host</keyword>
<keyword id="KW-1165">Clathrin-mediated endocytosis of virus by host</keyword>
<keyword id="KW-1015">Disulfide bond</keyword>
<keyword id="KW-1170">Fusion of virus membrane with host endosomal membrane</keyword>
<keyword id="KW-1168">Fusion of virus membrane with host membrane</keyword>
<keyword id="KW-0325">Glycoprotein</keyword>
<keyword id="KW-0348">Hemagglutinin</keyword>
<keyword id="KW-1032">Host cell membrane</keyword>
<keyword id="KW-1043">Host membrane</keyword>
<keyword id="KW-0945">Host-virus interaction</keyword>
<keyword id="KW-0449">Lipoprotein</keyword>
<keyword id="KW-0472">Membrane</keyword>
<keyword id="KW-0564">Palmitate</keyword>
<keyword id="KW-0732">Signal</keyword>
<keyword id="KW-0812">Transmembrane</keyword>
<keyword id="KW-1133">Transmembrane helix</keyword>
<keyword id="KW-1161">Viral attachment to host cell</keyword>
<keyword id="KW-0261">Viral envelope protein</keyword>
<keyword id="KW-1162">Viral penetration into host cytoplasm</keyword>
<keyword id="KW-0946">Virion</keyword>
<keyword id="KW-1164">Virus endocytosis by host</keyword>
<keyword id="KW-1160">Virus entry into host cell</keyword>
<protein>
    <recommendedName>
        <fullName evidence="1">Hemagglutinin</fullName>
    </recommendedName>
    <component>
        <recommendedName>
            <fullName evidence="1">Hemagglutinin HA1 chain</fullName>
        </recommendedName>
    </component>
    <component>
        <recommendedName>
            <fullName evidence="1">Hemagglutinin HA2 chain</fullName>
        </recommendedName>
    </component>
</protein>
<evidence type="ECO:0000255" key="1">
    <source>
        <dbReference type="HAMAP-Rule" id="MF_04072"/>
    </source>
</evidence>
<evidence type="ECO:0000305" key="2"/>
<organism>
    <name type="scientific">Influenza A virus (strain A/Memphis/110/1976 H3N2)</name>
    <dbReference type="NCBI Taxonomy" id="383581"/>
    <lineage>
        <taxon>Viruses</taxon>
        <taxon>Riboviria</taxon>
        <taxon>Orthornavirae</taxon>
        <taxon>Negarnaviricota</taxon>
        <taxon>Polyploviricotina</taxon>
        <taxon>Insthoviricetes</taxon>
        <taxon>Articulavirales</taxon>
        <taxon>Orthomyxoviridae</taxon>
        <taxon>Alphainfluenzavirus</taxon>
        <taxon>Alphainfluenzavirus influenzae</taxon>
        <taxon>Influenza A virus</taxon>
    </lineage>
</organism>
<accession>Q2RFA5</accession>
<dbReference type="EMBL" id="CY006835">
    <property type="protein sequence ID" value="ABC02266.1"/>
    <property type="molecule type" value="Genomic_RNA"/>
</dbReference>
<dbReference type="SMR" id="Q2RFA5"/>
<dbReference type="GlyCosmos" id="Q2RFA5">
    <property type="glycosylation" value="8 sites, No reported glycans"/>
</dbReference>
<dbReference type="Proteomes" id="UP000007792">
    <property type="component" value="Genome"/>
</dbReference>
<dbReference type="GO" id="GO:0020002">
    <property type="term" value="C:host cell plasma membrane"/>
    <property type="evidence" value="ECO:0007669"/>
    <property type="project" value="UniProtKB-SubCell"/>
</dbReference>
<dbReference type="GO" id="GO:0016020">
    <property type="term" value="C:membrane"/>
    <property type="evidence" value="ECO:0007669"/>
    <property type="project" value="UniProtKB-UniRule"/>
</dbReference>
<dbReference type="GO" id="GO:0019031">
    <property type="term" value="C:viral envelope"/>
    <property type="evidence" value="ECO:0007669"/>
    <property type="project" value="UniProtKB-UniRule"/>
</dbReference>
<dbReference type="GO" id="GO:0055036">
    <property type="term" value="C:virion membrane"/>
    <property type="evidence" value="ECO:0007669"/>
    <property type="project" value="UniProtKB-SubCell"/>
</dbReference>
<dbReference type="GO" id="GO:0046789">
    <property type="term" value="F:host cell surface receptor binding"/>
    <property type="evidence" value="ECO:0007669"/>
    <property type="project" value="UniProtKB-UniRule"/>
</dbReference>
<dbReference type="GO" id="GO:0075512">
    <property type="term" value="P:clathrin-dependent endocytosis of virus by host cell"/>
    <property type="evidence" value="ECO:0007669"/>
    <property type="project" value="UniProtKB-UniRule"/>
</dbReference>
<dbReference type="GO" id="GO:0039654">
    <property type="term" value="P:fusion of virus membrane with host endosome membrane"/>
    <property type="evidence" value="ECO:0007669"/>
    <property type="project" value="UniProtKB-UniRule"/>
</dbReference>
<dbReference type="GO" id="GO:0019064">
    <property type="term" value="P:fusion of virus membrane with host plasma membrane"/>
    <property type="evidence" value="ECO:0007669"/>
    <property type="project" value="InterPro"/>
</dbReference>
<dbReference type="GO" id="GO:0046761">
    <property type="term" value="P:viral budding from plasma membrane"/>
    <property type="evidence" value="ECO:0007669"/>
    <property type="project" value="UniProtKB-UniRule"/>
</dbReference>
<dbReference type="GO" id="GO:0019062">
    <property type="term" value="P:virion attachment to host cell"/>
    <property type="evidence" value="ECO:0007669"/>
    <property type="project" value="UniProtKB-KW"/>
</dbReference>
<dbReference type="FunFam" id="3.90.20.10:FF:000001">
    <property type="entry name" value="Hemagglutinin"/>
    <property type="match status" value="1"/>
</dbReference>
<dbReference type="FunFam" id="3.90.209.20:FF:000001">
    <property type="entry name" value="Hemagglutinin"/>
    <property type="match status" value="1"/>
</dbReference>
<dbReference type="Gene3D" id="3.90.20.10">
    <property type="match status" value="1"/>
</dbReference>
<dbReference type="Gene3D" id="3.90.209.20">
    <property type="match status" value="1"/>
</dbReference>
<dbReference type="HAMAP" id="MF_04072">
    <property type="entry name" value="INFV_HEMA"/>
    <property type="match status" value="1"/>
</dbReference>
<dbReference type="InterPro" id="IPR008980">
    <property type="entry name" value="Capsid_hemagglutn"/>
</dbReference>
<dbReference type="InterPro" id="IPR013828">
    <property type="entry name" value="Hemagglutn_HA1_a/b_dom_sf"/>
</dbReference>
<dbReference type="InterPro" id="IPR000149">
    <property type="entry name" value="Hemagglutn_influenz_A"/>
</dbReference>
<dbReference type="InterPro" id="IPR001364">
    <property type="entry name" value="Hemagglutn_influenz_A/B"/>
</dbReference>
<dbReference type="Pfam" id="PF00509">
    <property type="entry name" value="Hemagglutinin"/>
    <property type="match status" value="1"/>
</dbReference>
<dbReference type="PRINTS" id="PR00330">
    <property type="entry name" value="HEMAGGLUTN1"/>
</dbReference>
<dbReference type="PRINTS" id="PR00329">
    <property type="entry name" value="HEMAGGLUTN12"/>
</dbReference>
<dbReference type="SUPFAM" id="SSF58064">
    <property type="entry name" value="Influenza hemagglutinin (stalk)"/>
    <property type="match status" value="1"/>
</dbReference>
<dbReference type="SUPFAM" id="SSF49818">
    <property type="entry name" value="Viral protein domain"/>
    <property type="match status" value="1"/>
</dbReference>
<comment type="function">
    <text evidence="1">Binds to sialic acid-containing receptors on the cell surface, bringing about the attachment of the virus particle to the cell. This attachment induces virion internalization either through clathrin-dependent endocytosis or through clathrin- and caveolin-independent pathway. Plays a major role in the determination of host range restriction and virulence. Class I viral fusion protein. Responsible for penetration of the virus into the cell cytoplasm by mediating the fusion of the membrane of the endocytosed virus particle with the endosomal membrane. Low pH in endosomes induces an irreversible conformational change in HA2, releasing the fusion hydrophobic peptide. Several trimers are required to form a competent fusion pore.</text>
</comment>
<comment type="subunit">
    <text evidence="1">Homotrimer of disulfide-linked HA1-HA2.</text>
</comment>
<comment type="subcellular location">
    <subcellularLocation>
        <location evidence="1">Virion membrane</location>
        <topology evidence="1">Single-pass type I membrane protein</topology>
    </subcellularLocation>
    <subcellularLocation>
        <location evidence="1">Host apical cell membrane</location>
        <topology evidence="1">Single-pass type I membrane protein</topology>
    </subcellularLocation>
    <text evidence="1">Targeted to the apical plasma membrane in epithelial polarized cells through a signal present in the transmembrane domain. Associated with glycosphingolipid- and cholesterol-enriched detergent-resistant lipid rafts.</text>
</comment>
<comment type="PTM">
    <text evidence="1">Palmitoylated.</text>
</comment>
<comment type="PTM">
    <text evidence="1">In natural infection, inactive HA is matured into HA1 and HA2 outside the cell by one or more trypsin-like, arginine-specific endoprotease secreted by the bronchial epithelial cells. One identified protease that may be involved in this process is secreted in lungs by club cells.</text>
</comment>
<comment type="miscellaneous">
    <text>Major glycoprotein, comprises over 80% of the envelope proteins present in virus particle.</text>
</comment>
<comment type="miscellaneous">
    <text>The extent of infection into host organism is determined by HA. Influenza viruses bud from the apical surface of polarized epithelial cells (e.g. bronchial epithelial cells) into lumen of lungs and are therefore usually pneumotropic. The reason is that HA is cleaved by tryptase clara which is restricted to lungs. However, HAs of H5 and H7 pantropic avian viruses subtypes can be cleaved by furin and subtilisin-type enzymes, allowing the virus to grow in other organs than lungs.</text>
</comment>
<comment type="miscellaneous">
    <text evidence="2">The influenza A genome consist of 8 RNA segments. Genetic variation of hemagglutinin and/or neuraminidase genes results in the emergence of new influenza strains. The mechanism of variation can be the result of point mutations or the result of genetic reassortment between segments of two different strains.</text>
</comment>
<comment type="similarity">
    <text evidence="1">Belongs to the influenza viruses hemagglutinin family.</text>
</comment>
<reference key="1">
    <citation type="submission" date="2005-12" db="EMBL/GenBank/DDBJ databases">
        <title>The NIAID influenza genome sequencing project.</title>
        <authorList>
            <person name="Ghedin E."/>
            <person name="Spiro D."/>
            <person name="Miller N."/>
            <person name="Zaborsky J."/>
            <person name="Feldblyum T."/>
            <person name="Subbu V."/>
            <person name="Shumway M."/>
            <person name="Sparenborg J."/>
            <person name="Groveman L."/>
            <person name="Halpin R."/>
            <person name="Sitz J."/>
            <person name="Koo H."/>
            <person name="Salzberg S.L."/>
            <person name="Webster R.G."/>
            <person name="Hoffmann E."/>
            <person name="Krauss S."/>
            <person name="Naeve C."/>
            <person name="Bao Y."/>
            <person name="Bolotov P."/>
            <person name="Dernovoy D."/>
            <person name="Kiryutin B."/>
            <person name="Lipman D.J."/>
            <person name="Tatusova T."/>
        </authorList>
    </citation>
    <scope>NUCLEOTIDE SEQUENCE [GENOMIC RNA]</scope>
</reference>
<sequence length="566" mass="63379">MKTIIALSYIFCLVFAQDLPGNDNSTATLCLGHHAVPNGTLVKTITNDQIEVTNATELVQSSSTGKICDNPHRILDGINCTLIDALLGDPHCDGFQNEKWDLFVERSKAFSNCYPYDVPDYASLRSLVASSGTLEFINEGFNWTGVTQNGGSRACKRGPDNGFFSRLNWLYKSGSTYPVQNVTMPNNDNSDKLYIWGVHHPSTDKEQTDLYVQASGKVTVSTKRSQQTVIPNVGSRPWVRGLSSRVSIYWTIVKPGDILVINSNGNLIAPRGYFKMRTGKSSIMRSDAPIGTCSSECITPNGSIPNDKPFQNVNKITYGACPKYVKQNTLKLATGMRNVPEKQTRGIFGAIAGFIENGWEGMIDGWYGFRHQNSEGTGQAADLKSTQAAIDQINGKLNRVIEKTNEKFHQIEKEFSEVEGRIQDLEKYVEDTKIDLWSYNAELLVALENQHTIDLTDSEMNKLFEKTRRQLRENAEDMGNGCFKIYHKCDNACIGSIRNGTYDHDVYRDEALNNRFQIKGVELKSGYKDWILWISFAISCFLLCVVLLGFIMWACQKGNIRCNICI</sequence>
<gene>
    <name evidence="1" type="primary">HA</name>
</gene>
<organismHost>
    <name type="scientific">Aves</name>
    <dbReference type="NCBI Taxonomy" id="8782"/>
</organismHost>
<organismHost>
    <name type="scientific">Cetacea</name>
    <name type="common">whales</name>
    <dbReference type="NCBI Taxonomy" id="9721"/>
</organismHost>
<organismHost>
    <name type="scientific">Homo sapiens</name>
    <name type="common">Human</name>
    <dbReference type="NCBI Taxonomy" id="9606"/>
</organismHost>
<organismHost>
    <name type="scientific">Phocidae</name>
    <name type="common">true seals</name>
    <dbReference type="NCBI Taxonomy" id="9709"/>
</organismHost>
<organismHost>
    <name type="scientific">Sus scrofa</name>
    <name type="common">Pig</name>
    <dbReference type="NCBI Taxonomy" id="9823"/>
</organismHost>
<proteinExistence type="inferred from homology"/>